<accession>Q04ZU3</accession>
<proteinExistence type="inferred from homology"/>
<protein>
    <recommendedName>
        <fullName evidence="1">ATP synthase subunit alpha</fullName>
        <ecNumber evidence="1">7.1.2.2</ecNumber>
    </recommendedName>
    <alternativeName>
        <fullName evidence="1">ATP synthase F1 sector subunit alpha</fullName>
    </alternativeName>
    <alternativeName>
        <fullName evidence="1">F-ATPase subunit alpha</fullName>
    </alternativeName>
</protein>
<gene>
    <name evidence="1" type="primary">atpA</name>
    <name type="ordered locus">LBL_1973</name>
</gene>
<organism>
    <name type="scientific">Leptospira borgpetersenii serovar Hardjo-bovis (strain L550)</name>
    <dbReference type="NCBI Taxonomy" id="355276"/>
    <lineage>
        <taxon>Bacteria</taxon>
        <taxon>Pseudomonadati</taxon>
        <taxon>Spirochaetota</taxon>
        <taxon>Spirochaetia</taxon>
        <taxon>Leptospirales</taxon>
        <taxon>Leptospiraceae</taxon>
        <taxon>Leptospira</taxon>
    </lineage>
</organism>
<evidence type="ECO:0000255" key="1">
    <source>
        <dbReference type="HAMAP-Rule" id="MF_01346"/>
    </source>
</evidence>
<dbReference type="EC" id="7.1.2.2" evidence="1"/>
<dbReference type="EMBL" id="CP000348">
    <property type="protein sequence ID" value="ABJ79402.1"/>
    <property type="molecule type" value="Genomic_DNA"/>
</dbReference>
<dbReference type="RefSeq" id="WP_011670484.1">
    <property type="nucleotide sequence ID" value="NC_008508.1"/>
</dbReference>
<dbReference type="SMR" id="Q04ZU3"/>
<dbReference type="KEGG" id="lbl:LBL_1973"/>
<dbReference type="HOGENOM" id="CLU_010091_2_1_12"/>
<dbReference type="GO" id="GO:0005886">
    <property type="term" value="C:plasma membrane"/>
    <property type="evidence" value="ECO:0007669"/>
    <property type="project" value="UniProtKB-SubCell"/>
</dbReference>
<dbReference type="GO" id="GO:0045259">
    <property type="term" value="C:proton-transporting ATP synthase complex"/>
    <property type="evidence" value="ECO:0007669"/>
    <property type="project" value="UniProtKB-KW"/>
</dbReference>
<dbReference type="GO" id="GO:0043531">
    <property type="term" value="F:ADP binding"/>
    <property type="evidence" value="ECO:0007669"/>
    <property type="project" value="TreeGrafter"/>
</dbReference>
<dbReference type="GO" id="GO:0005524">
    <property type="term" value="F:ATP binding"/>
    <property type="evidence" value="ECO:0007669"/>
    <property type="project" value="UniProtKB-UniRule"/>
</dbReference>
<dbReference type="GO" id="GO:0046933">
    <property type="term" value="F:proton-transporting ATP synthase activity, rotational mechanism"/>
    <property type="evidence" value="ECO:0007669"/>
    <property type="project" value="UniProtKB-UniRule"/>
</dbReference>
<dbReference type="CDD" id="cd18113">
    <property type="entry name" value="ATP-synt_F1_alpha_C"/>
    <property type="match status" value="1"/>
</dbReference>
<dbReference type="CDD" id="cd18116">
    <property type="entry name" value="ATP-synt_F1_alpha_N"/>
    <property type="match status" value="1"/>
</dbReference>
<dbReference type="CDD" id="cd01132">
    <property type="entry name" value="F1-ATPase_alpha_CD"/>
    <property type="match status" value="1"/>
</dbReference>
<dbReference type="FunFam" id="1.20.150.20:FF:000001">
    <property type="entry name" value="ATP synthase subunit alpha"/>
    <property type="match status" value="1"/>
</dbReference>
<dbReference type="FunFam" id="2.40.30.20:FF:000001">
    <property type="entry name" value="ATP synthase subunit alpha"/>
    <property type="match status" value="1"/>
</dbReference>
<dbReference type="FunFam" id="3.40.50.300:FF:000002">
    <property type="entry name" value="ATP synthase subunit alpha"/>
    <property type="match status" value="1"/>
</dbReference>
<dbReference type="Gene3D" id="2.40.30.20">
    <property type="match status" value="1"/>
</dbReference>
<dbReference type="Gene3D" id="1.20.150.20">
    <property type="entry name" value="ATP synthase alpha/beta chain, C-terminal domain"/>
    <property type="match status" value="1"/>
</dbReference>
<dbReference type="Gene3D" id="3.40.50.300">
    <property type="entry name" value="P-loop containing nucleotide triphosphate hydrolases"/>
    <property type="match status" value="1"/>
</dbReference>
<dbReference type="HAMAP" id="MF_01346">
    <property type="entry name" value="ATP_synth_alpha_bact"/>
    <property type="match status" value="1"/>
</dbReference>
<dbReference type="InterPro" id="IPR023366">
    <property type="entry name" value="ATP_synth_asu-like_sf"/>
</dbReference>
<dbReference type="InterPro" id="IPR000793">
    <property type="entry name" value="ATP_synth_asu_C"/>
</dbReference>
<dbReference type="InterPro" id="IPR038376">
    <property type="entry name" value="ATP_synth_asu_C_sf"/>
</dbReference>
<dbReference type="InterPro" id="IPR033732">
    <property type="entry name" value="ATP_synth_F1_a_nt-bd_dom"/>
</dbReference>
<dbReference type="InterPro" id="IPR005294">
    <property type="entry name" value="ATP_synth_F1_asu"/>
</dbReference>
<dbReference type="InterPro" id="IPR020003">
    <property type="entry name" value="ATPase_a/bsu_AS"/>
</dbReference>
<dbReference type="InterPro" id="IPR004100">
    <property type="entry name" value="ATPase_F1/V1/A1_a/bsu_N"/>
</dbReference>
<dbReference type="InterPro" id="IPR036121">
    <property type="entry name" value="ATPase_F1/V1/A1_a/bsu_N_sf"/>
</dbReference>
<dbReference type="InterPro" id="IPR000194">
    <property type="entry name" value="ATPase_F1/V1/A1_a/bsu_nucl-bd"/>
</dbReference>
<dbReference type="InterPro" id="IPR027417">
    <property type="entry name" value="P-loop_NTPase"/>
</dbReference>
<dbReference type="NCBIfam" id="TIGR00962">
    <property type="entry name" value="atpA"/>
    <property type="match status" value="1"/>
</dbReference>
<dbReference type="NCBIfam" id="NF009884">
    <property type="entry name" value="PRK13343.1"/>
    <property type="match status" value="1"/>
</dbReference>
<dbReference type="PANTHER" id="PTHR48082">
    <property type="entry name" value="ATP SYNTHASE SUBUNIT ALPHA, MITOCHONDRIAL"/>
    <property type="match status" value="1"/>
</dbReference>
<dbReference type="PANTHER" id="PTHR48082:SF2">
    <property type="entry name" value="ATP SYNTHASE SUBUNIT ALPHA, MITOCHONDRIAL"/>
    <property type="match status" value="1"/>
</dbReference>
<dbReference type="Pfam" id="PF00006">
    <property type="entry name" value="ATP-synt_ab"/>
    <property type="match status" value="1"/>
</dbReference>
<dbReference type="Pfam" id="PF00306">
    <property type="entry name" value="ATP-synt_ab_C"/>
    <property type="match status" value="1"/>
</dbReference>
<dbReference type="Pfam" id="PF02874">
    <property type="entry name" value="ATP-synt_ab_N"/>
    <property type="match status" value="1"/>
</dbReference>
<dbReference type="PIRSF" id="PIRSF039088">
    <property type="entry name" value="F_ATPase_subunit_alpha"/>
    <property type="match status" value="1"/>
</dbReference>
<dbReference type="SUPFAM" id="SSF47917">
    <property type="entry name" value="C-terminal domain of alpha and beta subunits of F1 ATP synthase"/>
    <property type="match status" value="1"/>
</dbReference>
<dbReference type="SUPFAM" id="SSF50615">
    <property type="entry name" value="N-terminal domain of alpha and beta subunits of F1 ATP synthase"/>
    <property type="match status" value="1"/>
</dbReference>
<dbReference type="SUPFAM" id="SSF52540">
    <property type="entry name" value="P-loop containing nucleoside triphosphate hydrolases"/>
    <property type="match status" value="1"/>
</dbReference>
<dbReference type="PROSITE" id="PS00152">
    <property type="entry name" value="ATPASE_ALPHA_BETA"/>
    <property type="match status" value="1"/>
</dbReference>
<reference key="1">
    <citation type="journal article" date="2006" name="Proc. Natl. Acad. Sci. U.S.A.">
        <title>Genome reduction in Leptospira borgpetersenii reflects limited transmission potential.</title>
        <authorList>
            <person name="Bulach D.M."/>
            <person name="Zuerner R.L."/>
            <person name="Wilson P."/>
            <person name="Seemann T."/>
            <person name="McGrath A."/>
            <person name="Cullen P.A."/>
            <person name="Davis J."/>
            <person name="Johnson M."/>
            <person name="Kuczek E."/>
            <person name="Alt D.P."/>
            <person name="Peterson-Burch B."/>
            <person name="Coppel R.L."/>
            <person name="Rood J.I."/>
            <person name="Davies J.K."/>
            <person name="Adler B."/>
        </authorList>
    </citation>
    <scope>NUCLEOTIDE SEQUENCE [LARGE SCALE GENOMIC DNA]</scope>
    <source>
        <strain>L550</strain>
    </source>
</reference>
<sequence>MKIKTDEITSVLKQEILNYKKDLGVDEVGTVLEIGDGIARVYGLKNVMSGEMVEFQNGIFGQAFNLEDNSVGVVVYGDYLAIQEGFTVKRTSRILEVPVGPELLGRVVNPLGEPLDGKGPINAKLTRPVESPAPGIAMRQPVGEPMQTGIKAIDAMIPIGRGQRELIIGDRGTGKTSIALDTIINQKGTGVICVYVAIGQKASTVASTVEMLRNKGALEYTIVVSATAAEPAPLQYIAPYSGCSMAEYFMYNEKKATLVVYDDLSKQAVAYRQMSLLLRRPPGREAYPGDVFYLHSRLLERAAKLDDKYGAGSLTALPIIETQEGEVSAYIPTNVISITDGQIYLQSNLFASGNRPAVDVGISVSRVGSAAQIKAMKQVAGKMKLELAQFRDLEAFAQLGTELDPATQAQLDRGNRIVQMLKQPVSSPFPVEEQVVEIFAVTRGFMDKIPVPKVQQYGKFLLTRIKEQHSEVLEAIRKEKKISDEEKLGEVLSAIAEEFLRKH</sequence>
<feature type="chain" id="PRO_1000055072" description="ATP synthase subunit alpha">
    <location>
        <begin position="1"/>
        <end position="503"/>
    </location>
</feature>
<feature type="binding site" evidence="1">
    <location>
        <begin position="169"/>
        <end position="176"/>
    </location>
    <ligand>
        <name>ATP</name>
        <dbReference type="ChEBI" id="CHEBI:30616"/>
    </ligand>
</feature>
<feature type="site" description="Required for activity" evidence="1">
    <location>
        <position position="363"/>
    </location>
</feature>
<keyword id="KW-0066">ATP synthesis</keyword>
<keyword id="KW-0067">ATP-binding</keyword>
<keyword id="KW-0997">Cell inner membrane</keyword>
<keyword id="KW-1003">Cell membrane</keyword>
<keyword id="KW-0139">CF(1)</keyword>
<keyword id="KW-0375">Hydrogen ion transport</keyword>
<keyword id="KW-0406">Ion transport</keyword>
<keyword id="KW-0472">Membrane</keyword>
<keyword id="KW-0547">Nucleotide-binding</keyword>
<keyword id="KW-1278">Translocase</keyword>
<keyword id="KW-0813">Transport</keyword>
<name>ATPA_LEPBL</name>
<comment type="function">
    <text evidence="1">Produces ATP from ADP in the presence of a proton gradient across the membrane. The alpha chain is a regulatory subunit.</text>
</comment>
<comment type="catalytic activity">
    <reaction evidence="1">
        <text>ATP + H2O + 4 H(+)(in) = ADP + phosphate + 5 H(+)(out)</text>
        <dbReference type="Rhea" id="RHEA:57720"/>
        <dbReference type="ChEBI" id="CHEBI:15377"/>
        <dbReference type="ChEBI" id="CHEBI:15378"/>
        <dbReference type="ChEBI" id="CHEBI:30616"/>
        <dbReference type="ChEBI" id="CHEBI:43474"/>
        <dbReference type="ChEBI" id="CHEBI:456216"/>
        <dbReference type="EC" id="7.1.2.2"/>
    </reaction>
</comment>
<comment type="subunit">
    <text evidence="1">F-type ATPases have 2 components, CF(1) - the catalytic core - and CF(0) - the membrane proton channel. CF(1) has five subunits: alpha(3), beta(3), gamma(1), delta(1), epsilon(1). CF(0) has three main subunits: a(1), b(2) and c(9-12). The alpha and beta chains form an alternating ring which encloses part of the gamma chain. CF(1) is attached to CF(0) by a central stalk formed by the gamma and epsilon chains, while a peripheral stalk is formed by the delta and b chains.</text>
</comment>
<comment type="subcellular location">
    <subcellularLocation>
        <location evidence="1">Cell inner membrane</location>
        <topology evidence="1">Peripheral membrane protein</topology>
    </subcellularLocation>
</comment>
<comment type="similarity">
    <text evidence="1">Belongs to the ATPase alpha/beta chains family.</text>
</comment>